<feature type="chain" id="PRO_0000140732" description="3-dehydroquinate synthase">
    <location>
        <begin position="1"/>
        <end position="373"/>
    </location>
</feature>
<feature type="binding site" evidence="1">
    <location>
        <begin position="120"/>
        <end position="124"/>
    </location>
    <ligand>
        <name>NAD(+)</name>
        <dbReference type="ChEBI" id="CHEBI:57540"/>
    </ligand>
</feature>
<feature type="binding site" evidence="1">
    <location>
        <begin position="144"/>
        <end position="145"/>
    </location>
    <ligand>
        <name>NAD(+)</name>
        <dbReference type="ChEBI" id="CHEBI:57540"/>
    </ligand>
</feature>
<feature type="binding site" evidence="1">
    <location>
        <position position="157"/>
    </location>
    <ligand>
        <name>NAD(+)</name>
        <dbReference type="ChEBI" id="CHEBI:57540"/>
    </ligand>
</feature>
<feature type="binding site" evidence="1">
    <location>
        <position position="166"/>
    </location>
    <ligand>
        <name>NAD(+)</name>
        <dbReference type="ChEBI" id="CHEBI:57540"/>
    </ligand>
</feature>
<feature type="binding site" evidence="1">
    <location>
        <begin position="184"/>
        <end position="187"/>
    </location>
    <ligand>
        <name>NAD(+)</name>
        <dbReference type="ChEBI" id="CHEBI:57540"/>
    </ligand>
</feature>
<feature type="binding site" evidence="1">
    <location>
        <position position="199"/>
    </location>
    <ligand>
        <name>Zn(2+)</name>
        <dbReference type="ChEBI" id="CHEBI:29105"/>
    </ligand>
</feature>
<feature type="binding site" evidence="1">
    <location>
        <position position="262"/>
    </location>
    <ligand>
        <name>Zn(2+)</name>
        <dbReference type="ChEBI" id="CHEBI:29105"/>
    </ligand>
</feature>
<feature type="binding site" evidence="1">
    <location>
        <position position="278"/>
    </location>
    <ligand>
        <name>Zn(2+)</name>
        <dbReference type="ChEBI" id="CHEBI:29105"/>
    </ligand>
</feature>
<reference key="1">
    <citation type="journal article" date="2003" name="Proc. Natl. Acad. Sci. U.S.A.">
        <title>The genome sequence of Clostridium tetani, the causative agent of tetanus disease.</title>
        <authorList>
            <person name="Brueggemann H."/>
            <person name="Baeumer S."/>
            <person name="Fricke W.F."/>
            <person name="Wiezer A."/>
            <person name="Liesegang H."/>
            <person name="Decker I."/>
            <person name="Herzberg C."/>
            <person name="Martinez-Arias R."/>
            <person name="Merkl R."/>
            <person name="Henne A."/>
            <person name="Gottschalk G."/>
        </authorList>
    </citation>
    <scope>NUCLEOTIDE SEQUENCE [LARGE SCALE GENOMIC DNA]</scope>
    <source>
        <strain>Massachusetts / E88</strain>
    </source>
</reference>
<gene>
    <name evidence="1" type="primary">aroB</name>
    <name type="ordered locus">CTC_01620</name>
</gene>
<organism>
    <name type="scientific">Clostridium tetani (strain Massachusetts / E88)</name>
    <dbReference type="NCBI Taxonomy" id="212717"/>
    <lineage>
        <taxon>Bacteria</taxon>
        <taxon>Bacillati</taxon>
        <taxon>Bacillota</taxon>
        <taxon>Clostridia</taxon>
        <taxon>Eubacteriales</taxon>
        <taxon>Clostridiaceae</taxon>
        <taxon>Clostridium</taxon>
    </lineage>
</organism>
<proteinExistence type="inferred from homology"/>
<accession>Q894C9</accession>
<keyword id="KW-0028">Amino-acid biosynthesis</keyword>
<keyword id="KW-0057">Aromatic amino acid biosynthesis</keyword>
<keyword id="KW-0170">Cobalt</keyword>
<keyword id="KW-0963">Cytoplasm</keyword>
<keyword id="KW-0456">Lyase</keyword>
<keyword id="KW-0479">Metal-binding</keyword>
<keyword id="KW-0520">NAD</keyword>
<keyword id="KW-0547">Nucleotide-binding</keyword>
<keyword id="KW-1185">Reference proteome</keyword>
<keyword id="KW-0862">Zinc</keyword>
<comment type="function">
    <text evidence="1">Catalyzes the conversion of 3-deoxy-D-arabino-heptulosonate 7-phosphate (DAHP) to dehydroquinate (DHQ).</text>
</comment>
<comment type="catalytic activity">
    <reaction evidence="1">
        <text>7-phospho-2-dehydro-3-deoxy-D-arabino-heptonate = 3-dehydroquinate + phosphate</text>
        <dbReference type="Rhea" id="RHEA:21968"/>
        <dbReference type="ChEBI" id="CHEBI:32364"/>
        <dbReference type="ChEBI" id="CHEBI:43474"/>
        <dbReference type="ChEBI" id="CHEBI:58394"/>
        <dbReference type="EC" id="4.2.3.4"/>
    </reaction>
</comment>
<comment type="cofactor">
    <cofactor evidence="1">
        <name>NAD(+)</name>
        <dbReference type="ChEBI" id="CHEBI:57540"/>
    </cofactor>
</comment>
<comment type="cofactor">
    <cofactor evidence="1">
        <name>Co(2+)</name>
        <dbReference type="ChEBI" id="CHEBI:48828"/>
    </cofactor>
    <cofactor evidence="1">
        <name>Zn(2+)</name>
        <dbReference type="ChEBI" id="CHEBI:29105"/>
    </cofactor>
    <text evidence="1">Binds 1 divalent metal cation per subunit. Can use either Co(2+) or Zn(2+).</text>
</comment>
<comment type="pathway">
    <text evidence="1">Metabolic intermediate biosynthesis; chorismate biosynthesis; chorismate from D-erythrose 4-phosphate and phosphoenolpyruvate: step 2/7.</text>
</comment>
<comment type="subcellular location">
    <subcellularLocation>
        <location evidence="1">Cytoplasm</location>
    </subcellularLocation>
</comment>
<comment type="similarity">
    <text evidence="1">Belongs to the sugar phosphate cyclases superfamily. Dehydroquinate synthase family.</text>
</comment>
<name>AROB_CLOTE</name>
<dbReference type="EC" id="4.2.3.4" evidence="1"/>
<dbReference type="EMBL" id="AE015927">
    <property type="protein sequence ID" value="AAO36163.1"/>
    <property type="molecule type" value="Genomic_DNA"/>
</dbReference>
<dbReference type="SMR" id="Q894C9"/>
<dbReference type="STRING" id="212717.CTC_01620"/>
<dbReference type="KEGG" id="ctc:CTC_01620"/>
<dbReference type="HOGENOM" id="CLU_001201_0_1_9"/>
<dbReference type="UniPathway" id="UPA00053">
    <property type="reaction ID" value="UER00085"/>
</dbReference>
<dbReference type="Proteomes" id="UP000001412">
    <property type="component" value="Chromosome"/>
</dbReference>
<dbReference type="GO" id="GO:0005737">
    <property type="term" value="C:cytoplasm"/>
    <property type="evidence" value="ECO:0007669"/>
    <property type="project" value="UniProtKB-SubCell"/>
</dbReference>
<dbReference type="GO" id="GO:0003856">
    <property type="term" value="F:3-dehydroquinate synthase activity"/>
    <property type="evidence" value="ECO:0007669"/>
    <property type="project" value="UniProtKB-UniRule"/>
</dbReference>
<dbReference type="GO" id="GO:0046872">
    <property type="term" value="F:metal ion binding"/>
    <property type="evidence" value="ECO:0007669"/>
    <property type="project" value="UniProtKB-KW"/>
</dbReference>
<dbReference type="GO" id="GO:0000166">
    <property type="term" value="F:nucleotide binding"/>
    <property type="evidence" value="ECO:0007669"/>
    <property type="project" value="UniProtKB-KW"/>
</dbReference>
<dbReference type="GO" id="GO:0008652">
    <property type="term" value="P:amino acid biosynthetic process"/>
    <property type="evidence" value="ECO:0007669"/>
    <property type="project" value="UniProtKB-KW"/>
</dbReference>
<dbReference type="GO" id="GO:0009073">
    <property type="term" value="P:aromatic amino acid family biosynthetic process"/>
    <property type="evidence" value="ECO:0007669"/>
    <property type="project" value="UniProtKB-KW"/>
</dbReference>
<dbReference type="GO" id="GO:0009423">
    <property type="term" value="P:chorismate biosynthetic process"/>
    <property type="evidence" value="ECO:0007669"/>
    <property type="project" value="UniProtKB-UniRule"/>
</dbReference>
<dbReference type="CDD" id="cd08195">
    <property type="entry name" value="DHQS"/>
    <property type="match status" value="1"/>
</dbReference>
<dbReference type="FunFam" id="3.40.50.1970:FF:000007">
    <property type="entry name" value="Pentafunctional AROM polypeptide"/>
    <property type="match status" value="1"/>
</dbReference>
<dbReference type="Gene3D" id="3.40.50.1970">
    <property type="match status" value="1"/>
</dbReference>
<dbReference type="Gene3D" id="1.20.1090.10">
    <property type="entry name" value="Dehydroquinate synthase-like - alpha domain"/>
    <property type="match status" value="1"/>
</dbReference>
<dbReference type="HAMAP" id="MF_00110">
    <property type="entry name" value="DHQ_synthase"/>
    <property type="match status" value="1"/>
</dbReference>
<dbReference type="InterPro" id="IPR050071">
    <property type="entry name" value="Dehydroquinate_synthase"/>
</dbReference>
<dbReference type="InterPro" id="IPR016037">
    <property type="entry name" value="DHQ_synth_AroB"/>
</dbReference>
<dbReference type="InterPro" id="IPR030963">
    <property type="entry name" value="DHQ_synth_fam"/>
</dbReference>
<dbReference type="InterPro" id="IPR030960">
    <property type="entry name" value="DHQS/DOIS_N"/>
</dbReference>
<dbReference type="InterPro" id="IPR056179">
    <property type="entry name" value="DHQS_C"/>
</dbReference>
<dbReference type="NCBIfam" id="TIGR01357">
    <property type="entry name" value="aroB"/>
    <property type="match status" value="1"/>
</dbReference>
<dbReference type="PANTHER" id="PTHR43622">
    <property type="entry name" value="3-DEHYDROQUINATE SYNTHASE"/>
    <property type="match status" value="1"/>
</dbReference>
<dbReference type="PANTHER" id="PTHR43622:SF1">
    <property type="entry name" value="3-DEHYDROQUINATE SYNTHASE"/>
    <property type="match status" value="1"/>
</dbReference>
<dbReference type="Pfam" id="PF01761">
    <property type="entry name" value="DHQ_synthase"/>
    <property type="match status" value="1"/>
</dbReference>
<dbReference type="Pfam" id="PF24621">
    <property type="entry name" value="DHQS_C"/>
    <property type="match status" value="1"/>
</dbReference>
<dbReference type="PIRSF" id="PIRSF001455">
    <property type="entry name" value="DHQ_synth"/>
    <property type="match status" value="1"/>
</dbReference>
<dbReference type="SUPFAM" id="SSF56796">
    <property type="entry name" value="Dehydroquinate synthase-like"/>
    <property type="match status" value="1"/>
</dbReference>
<evidence type="ECO:0000255" key="1">
    <source>
        <dbReference type="HAMAP-Rule" id="MF_00110"/>
    </source>
</evidence>
<protein>
    <recommendedName>
        <fullName evidence="1">3-dehydroquinate synthase</fullName>
        <shortName evidence="1">DHQS</shortName>
        <ecNumber evidence="1">4.2.3.4</ecNumber>
    </recommendedName>
</protein>
<sequence>MSEIFYNIVRRVRRDTMREIEVEGDNRYKIYIDTNLDKLYKAFEDYKIKSNSEMFLITDDKVYSIYKDRIEMLKNIYNIKEFYFKNGEENKTLETLQEIYSFLMENNAKRNSIIIALGGGVVGDLVGFVASTYMRGVRYINIPTTLLSQIDSCVGGKVGYNYKGIKNLIGSFYNPEFVFISTNFLKTLDFQRFKDGLGEVIKYGLILDEEIISFIEENYKGVLEKESDKLLYITRTCLILKKQVIEMDYKDLGFRNILNFGHTIGHAIEMTSKNKITHGEAVALGMLVSLKLSEHIYGLDKNLYYRMEKLYKKLGLPTKYKVDNYNLFMYAINHDKKNKDNIRFVLLKDVEKPEVKIEVNKEEILKAIEESIN</sequence>